<evidence type="ECO:0000255" key="1">
    <source>
        <dbReference type="HAMAP-Rule" id="MF_00735"/>
    </source>
</evidence>
<keyword id="KW-0963">Cytoplasm</keyword>
<keyword id="KW-0489">Methyltransferase</keyword>
<keyword id="KW-0949">S-adenosyl-L-methionine</keyword>
<keyword id="KW-0808">Transferase</keyword>
<reference key="1">
    <citation type="journal article" date="2009" name="PLoS Genet.">
        <title>Organised genome dynamics in the Escherichia coli species results in highly diverse adaptive paths.</title>
        <authorList>
            <person name="Touchon M."/>
            <person name="Hoede C."/>
            <person name="Tenaillon O."/>
            <person name="Barbe V."/>
            <person name="Baeriswyl S."/>
            <person name="Bidet P."/>
            <person name="Bingen E."/>
            <person name="Bonacorsi S."/>
            <person name="Bouchier C."/>
            <person name="Bouvet O."/>
            <person name="Calteau A."/>
            <person name="Chiapello H."/>
            <person name="Clermont O."/>
            <person name="Cruveiller S."/>
            <person name="Danchin A."/>
            <person name="Diard M."/>
            <person name="Dossat C."/>
            <person name="Karoui M.E."/>
            <person name="Frapy E."/>
            <person name="Garry L."/>
            <person name="Ghigo J.M."/>
            <person name="Gilles A.M."/>
            <person name="Johnson J."/>
            <person name="Le Bouguenec C."/>
            <person name="Lescat M."/>
            <person name="Mangenot S."/>
            <person name="Martinez-Jehanne V."/>
            <person name="Matic I."/>
            <person name="Nassif X."/>
            <person name="Oztas S."/>
            <person name="Petit M.A."/>
            <person name="Pichon C."/>
            <person name="Rouy Z."/>
            <person name="Ruf C.S."/>
            <person name="Schneider D."/>
            <person name="Tourret J."/>
            <person name="Vacherie B."/>
            <person name="Vallenet D."/>
            <person name="Medigue C."/>
            <person name="Rocha E.P.C."/>
            <person name="Denamur E."/>
        </authorList>
    </citation>
    <scope>NUCLEOTIDE SEQUENCE [LARGE SCALE GENOMIC DNA]</scope>
    <source>
        <strain>UMN026 / ExPEC</strain>
    </source>
</reference>
<organism>
    <name type="scientific">Escherichia coli O17:K52:H18 (strain UMN026 / ExPEC)</name>
    <dbReference type="NCBI Taxonomy" id="585056"/>
    <lineage>
        <taxon>Bacteria</taxon>
        <taxon>Pseudomonadati</taxon>
        <taxon>Pseudomonadota</taxon>
        <taxon>Gammaproteobacteria</taxon>
        <taxon>Enterobacterales</taxon>
        <taxon>Enterobacteriaceae</taxon>
        <taxon>Escherichia</taxon>
    </lineage>
</organism>
<accession>B7NDN7</accession>
<proteinExistence type="inferred from homology"/>
<feature type="chain" id="PRO_1000192626" description="Ribosomal protein L11 methyltransferase">
    <location>
        <begin position="1"/>
        <end position="293"/>
    </location>
</feature>
<feature type="binding site" evidence="1">
    <location>
        <position position="145"/>
    </location>
    <ligand>
        <name>S-adenosyl-L-methionine</name>
        <dbReference type="ChEBI" id="CHEBI:59789"/>
    </ligand>
</feature>
<feature type="binding site" evidence="1">
    <location>
        <position position="166"/>
    </location>
    <ligand>
        <name>S-adenosyl-L-methionine</name>
        <dbReference type="ChEBI" id="CHEBI:59789"/>
    </ligand>
</feature>
<feature type="binding site" evidence="1">
    <location>
        <position position="188"/>
    </location>
    <ligand>
        <name>S-adenosyl-L-methionine</name>
        <dbReference type="ChEBI" id="CHEBI:59789"/>
    </ligand>
</feature>
<feature type="binding site" evidence="1">
    <location>
        <position position="230"/>
    </location>
    <ligand>
        <name>S-adenosyl-L-methionine</name>
        <dbReference type="ChEBI" id="CHEBI:59789"/>
    </ligand>
</feature>
<name>PRMA_ECOLU</name>
<gene>
    <name evidence="1" type="primary">prmA</name>
    <name type="ordered locus">ECUMN_3733</name>
</gene>
<comment type="function">
    <text evidence="1">Methylates ribosomal protein L11.</text>
</comment>
<comment type="catalytic activity">
    <reaction evidence="1">
        <text>L-lysyl-[protein] + 3 S-adenosyl-L-methionine = N(6),N(6),N(6)-trimethyl-L-lysyl-[protein] + 3 S-adenosyl-L-homocysteine + 3 H(+)</text>
        <dbReference type="Rhea" id="RHEA:54192"/>
        <dbReference type="Rhea" id="RHEA-COMP:9752"/>
        <dbReference type="Rhea" id="RHEA-COMP:13826"/>
        <dbReference type="ChEBI" id="CHEBI:15378"/>
        <dbReference type="ChEBI" id="CHEBI:29969"/>
        <dbReference type="ChEBI" id="CHEBI:57856"/>
        <dbReference type="ChEBI" id="CHEBI:59789"/>
        <dbReference type="ChEBI" id="CHEBI:61961"/>
    </reaction>
</comment>
<comment type="subcellular location">
    <subcellularLocation>
        <location evidence="1">Cytoplasm</location>
    </subcellularLocation>
</comment>
<comment type="similarity">
    <text evidence="1">Belongs to the methyltransferase superfamily. PrmA family.</text>
</comment>
<protein>
    <recommendedName>
        <fullName evidence="1">Ribosomal protein L11 methyltransferase</fullName>
        <shortName evidence="1">L11 Mtase</shortName>
        <ecNumber evidence="1">2.1.1.-</ecNumber>
    </recommendedName>
</protein>
<sequence length="293" mass="31877">MPWIQLKLNTTGANAEDLSDALMEAGAVSITFQDTHDTPVFEPLPGETRLWGDTDVIGLFDAETDMNDVVAILENHPLLGAGFAHKIEQLEDKDWEREWMDNFHPMRFGERLWICPSWRDVPDENAVNVMLDPGLAFGTGTHPTTSLCLQWLDSLDLTGKTVIDFGCGSGILAIAALKLGAAKAIGIDIDPQAIQASRDNAERNGVSDRLELYLPKDQPEEMKADVVVANILAGPLRELAPLISVLPVSGGLLGLSGILASQAESVCEAYADSFALDPVVEKEEWCRITGRKN</sequence>
<dbReference type="EC" id="2.1.1.-" evidence="1"/>
<dbReference type="EMBL" id="CU928163">
    <property type="protein sequence ID" value="CAR14887.1"/>
    <property type="molecule type" value="Genomic_DNA"/>
</dbReference>
<dbReference type="RefSeq" id="WP_001145827.1">
    <property type="nucleotide sequence ID" value="NC_011751.1"/>
</dbReference>
<dbReference type="RefSeq" id="YP_002414392.1">
    <property type="nucleotide sequence ID" value="NC_011751.1"/>
</dbReference>
<dbReference type="SMR" id="B7NDN7"/>
<dbReference type="STRING" id="585056.ECUMN_3733"/>
<dbReference type="GeneID" id="75206107"/>
<dbReference type="KEGG" id="eum:ECUMN_3733"/>
<dbReference type="PATRIC" id="fig|585056.7.peg.3915"/>
<dbReference type="HOGENOM" id="CLU_049382_4_1_6"/>
<dbReference type="Proteomes" id="UP000007097">
    <property type="component" value="Chromosome"/>
</dbReference>
<dbReference type="GO" id="GO:0005829">
    <property type="term" value="C:cytosol"/>
    <property type="evidence" value="ECO:0007669"/>
    <property type="project" value="TreeGrafter"/>
</dbReference>
<dbReference type="GO" id="GO:0016279">
    <property type="term" value="F:protein-lysine N-methyltransferase activity"/>
    <property type="evidence" value="ECO:0007669"/>
    <property type="project" value="TreeGrafter"/>
</dbReference>
<dbReference type="GO" id="GO:0032259">
    <property type="term" value="P:methylation"/>
    <property type="evidence" value="ECO:0007669"/>
    <property type="project" value="UniProtKB-KW"/>
</dbReference>
<dbReference type="CDD" id="cd02440">
    <property type="entry name" value="AdoMet_MTases"/>
    <property type="match status" value="1"/>
</dbReference>
<dbReference type="FunFam" id="3.40.50.150:FF:000021">
    <property type="entry name" value="Ribosomal protein L11 methyltransferase"/>
    <property type="match status" value="1"/>
</dbReference>
<dbReference type="Gene3D" id="3.40.50.150">
    <property type="entry name" value="Vaccinia Virus protein VP39"/>
    <property type="match status" value="1"/>
</dbReference>
<dbReference type="HAMAP" id="MF_00735">
    <property type="entry name" value="Methyltr_PrmA"/>
    <property type="match status" value="1"/>
</dbReference>
<dbReference type="InterPro" id="IPR050078">
    <property type="entry name" value="Ribosomal_L11_MeTrfase_PrmA"/>
</dbReference>
<dbReference type="InterPro" id="IPR004498">
    <property type="entry name" value="Ribosomal_PrmA_MeTrfase"/>
</dbReference>
<dbReference type="InterPro" id="IPR029063">
    <property type="entry name" value="SAM-dependent_MTases_sf"/>
</dbReference>
<dbReference type="NCBIfam" id="TIGR00406">
    <property type="entry name" value="prmA"/>
    <property type="match status" value="1"/>
</dbReference>
<dbReference type="PANTHER" id="PTHR43648">
    <property type="entry name" value="ELECTRON TRANSFER FLAVOPROTEIN BETA SUBUNIT LYSINE METHYLTRANSFERASE"/>
    <property type="match status" value="1"/>
</dbReference>
<dbReference type="PANTHER" id="PTHR43648:SF1">
    <property type="entry name" value="ELECTRON TRANSFER FLAVOPROTEIN BETA SUBUNIT LYSINE METHYLTRANSFERASE"/>
    <property type="match status" value="1"/>
</dbReference>
<dbReference type="Pfam" id="PF06325">
    <property type="entry name" value="PrmA"/>
    <property type="match status" value="1"/>
</dbReference>
<dbReference type="PIRSF" id="PIRSF000401">
    <property type="entry name" value="RPL11_MTase"/>
    <property type="match status" value="1"/>
</dbReference>
<dbReference type="SUPFAM" id="SSF53335">
    <property type="entry name" value="S-adenosyl-L-methionine-dependent methyltransferases"/>
    <property type="match status" value="1"/>
</dbReference>